<gene>
    <name evidence="1" type="primary">argS</name>
    <name type="ordered locus">LSL_0677</name>
</gene>
<accession>Q1WU48</accession>
<sequence length="563" mass="63813">MDYKVKVAQVIEQAVDGKLSQEDILAKIEKPKTLNLGDYAFPAFVLSKVLRKAPQMIASELVEKIDQTGFEKVEAVGPYVNFFLDKKEFSKDILSEVLSEGSAYGNQDLGHGGNVPIDMSSPNIAKPMSMGHLRSTVIGNSLALLLEKVNYKPIKIDHLGDWGTQFGKLIVAYKLWGSEEEVKADPINNLLKYYVRFHEEDVNNPELDEEAREWFKKLEDGDEEALKLWKWFREESLKKFTEVYDRLNITFDSYNGEAFYNDKMDEITDLLQEKGLLKESQGAEIVDLEKYDLNPALIRKTDGATLYITRDLAAALYRYRTYDFVQSLYVVGQEQTNHFKQLKAVLKEMGYDWSDDIHHIPFGLITSGGKKLSTRSGRVILLEEVLDDAVKLANKQIEEKNPNLADKEEVAEAVGVGAVVFHDLKNERINSFDFNLDEVVRFEGETGPYVQYSHARAMSILRKAGDLELDSDNLEISDPEAWQTLRLLAAFPETVKKAVSEYEPSVVAKYAIHLAKAFNKYYAHSRILNDDAEKNARLALVQSVATTLKESLRLLGVKAPNEM</sequence>
<organism>
    <name type="scientific">Ligilactobacillus salivarius (strain UCC118)</name>
    <name type="common">Lactobacillus salivarius</name>
    <dbReference type="NCBI Taxonomy" id="362948"/>
    <lineage>
        <taxon>Bacteria</taxon>
        <taxon>Bacillati</taxon>
        <taxon>Bacillota</taxon>
        <taxon>Bacilli</taxon>
        <taxon>Lactobacillales</taxon>
        <taxon>Lactobacillaceae</taxon>
        <taxon>Ligilactobacillus</taxon>
    </lineage>
</organism>
<evidence type="ECO:0000255" key="1">
    <source>
        <dbReference type="HAMAP-Rule" id="MF_00123"/>
    </source>
</evidence>
<feature type="chain" id="PRO_1000018052" description="Arginine--tRNA ligase">
    <location>
        <begin position="1"/>
        <end position="563"/>
    </location>
</feature>
<feature type="short sequence motif" description="'HIGH' region">
    <location>
        <begin position="122"/>
        <end position="132"/>
    </location>
</feature>
<protein>
    <recommendedName>
        <fullName evidence="1">Arginine--tRNA ligase</fullName>
        <ecNumber evidence="1">6.1.1.19</ecNumber>
    </recommendedName>
    <alternativeName>
        <fullName evidence="1">Arginyl-tRNA synthetase</fullName>
        <shortName evidence="1">ArgRS</shortName>
    </alternativeName>
</protein>
<name>SYR_LIGS1</name>
<proteinExistence type="inferred from homology"/>
<keyword id="KW-0030">Aminoacyl-tRNA synthetase</keyword>
<keyword id="KW-0067">ATP-binding</keyword>
<keyword id="KW-0963">Cytoplasm</keyword>
<keyword id="KW-0436">Ligase</keyword>
<keyword id="KW-0547">Nucleotide-binding</keyword>
<keyword id="KW-0648">Protein biosynthesis</keyword>
<keyword id="KW-1185">Reference proteome</keyword>
<comment type="catalytic activity">
    <reaction evidence="1">
        <text>tRNA(Arg) + L-arginine + ATP = L-arginyl-tRNA(Arg) + AMP + diphosphate</text>
        <dbReference type="Rhea" id="RHEA:20301"/>
        <dbReference type="Rhea" id="RHEA-COMP:9658"/>
        <dbReference type="Rhea" id="RHEA-COMP:9673"/>
        <dbReference type="ChEBI" id="CHEBI:30616"/>
        <dbReference type="ChEBI" id="CHEBI:32682"/>
        <dbReference type="ChEBI" id="CHEBI:33019"/>
        <dbReference type="ChEBI" id="CHEBI:78442"/>
        <dbReference type="ChEBI" id="CHEBI:78513"/>
        <dbReference type="ChEBI" id="CHEBI:456215"/>
        <dbReference type="EC" id="6.1.1.19"/>
    </reaction>
</comment>
<comment type="subunit">
    <text evidence="1">Monomer.</text>
</comment>
<comment type="subcellular location">
    <subcellularLocation>
        <location evidence="1">Cytoplasm</location>
    </subcellularLocation>
</comment>
<comment type="similarity">
    <text evidence="1">Belongs to the class-I aminoacyl-tRNA synthetase family.</text>
</comment>
<reference key="1">
    <citation type="journal article" date="2006" name="Proc. Natl. Acad. Sci. U.S.A.">
        <title>Multireplicon genome architecture of Lactobacillus salivarius.</title>
        <authorList>
            <person name="Claesson M.J."/>
            <person name="Li Y."/>
            <person name="Leahy S."/>
            <person name="Canchaya C."/>
            <person name="van Pijkeren J.P."/>
            <person name="Cerdeno-Tarraga A.M."/>
            <person name="Parkhill J."/>
            <person name="Flynn S."/>
            <person name="O'Sullivan G.C."/>
            <person name="Collins J.K."/>
            <person name="Higgins D."/>
            <person name="Shanahan F."/>
            <person name="Fitzgerald G.F."/>
            <person name="van Sinderen D."/>
            <person name="O'Toole P.W."/>
        </authorList>
    </citation>
    <scope>NUCLEOTIDE SEQUENCE [LARGE SCALE GENOMIC DNA]</scope>
    <source>
        <strain>UCC118</strain>
    </source>
</reference>
<dbReference type="EC" id="6.1.1.19" evidence="1"/>
<dbReference type="EMBL" id="CP000233">
    <property type="protein sequence ID" value="ABD99487.1"/>
    <property type="molecule type" value="Genomic_DNA"/>
</dbReference>
<dbReference type="RefSeq" id="WP_011475862.1">
    <property type="nucleotide sequence ID" value="NC_007929.1"/>
</dbReference>
<dbReference type="RefSeq" id="YP_535570.1">
    <property type="nucleotide sequence ID" value="NC_007929.1"/>
</dbReference>
<dbReference type="SMR" id="Q1WU48"/>
<dbReference type="STRING" id="362948.LSL_0677"/>
<dbReference type="KEGG" id="lsl:LSL_0677"/>
<dbReference type="PATRIC" id="fig|362948.14.peg.757"/>
<dbReference type="HOGENOM" id="CLU_006406_6_1_9"/>
<dbReference type="OrthoDB" id="9805987at2"/>
<dbReference type="Proteomes" id="UP000006559">
    <property type="component" value="Chromosome"/>
</dbReference>
<dbReference type="GO" id="GO:0005737">
    <property type="term" value="C:cytoplasm"/>
    <property type="evidence" value="ECO:0007669"/>
    <property type="project" value="UniProtKB-SubCell"/>
</dbReference>
<dbReference type="GO" id="GO:0004814">
    <property type="term" value="F:arginine-tRNA ligase activity"/>
    <property type="evidence" value="ECO:0007669"/>
    <property type="project" value="UniProtKB-UniRule"/>
</dbReference>
<dbReference type="GO" id="GO:0005524">
    <property type="term" value="F:ATP binding"/>
    <property type="evidence" value="ECO:0007669"/>
    <property type="project" value="UniProtKB-UniRule"/>
</dbReference>
<dbReference type="GO" id="GO:0006420">
    <property type="term" value="P:arginyl-tRNA aminoacylation"/>
    <property type="evidence" value="ECO:0007669"/>
    <property type="project" value="UniProtKB-UniRule"/>
</dbReference>
<dbReference type="CDD" id="cd07956">
    <property type="entry name" value="Anticodon_Ia_Arg"/>
    <property type="match status" value="1"/>
</dbReference>
<dbReference type="CDD" id="cd00671">
    <property type="entry name" value="ArgRS_core"/>
    <property type="match status" value="1"/>
</dbReference>
<dbReference type="FunFam" id="3.40.50.620:FF:000116">
    <property type="entry name" value="Arginine--tRNA ligase"/>
    <property type="match status" value="1"/>
</dbReference>
<dbReference type="FunFam" id="1.10.730.10:FF:000006">
    <property type="entry name" value="Arginyl-tRNA synthetase 2, mitochondrial"/>
    <property type="match status" value="1"/>
</dbReference>
<dbReference type="Gene3D" id="3.30.1360.70">
    <property type="entry name" value="Arginyl tRNA synthetase N-terminal domain"/>
    <property type="match status" value="1"/>
</dbReference>
<dbReference type="Gene3D" id="3.40.50.620">
    <property type="entry name" value="HUPs"/>
    <property type="match status" value="1"/>
</dbReference>
<dbReference type="Gene3D" id="1.10.730.10">
    <property type="entry name" value="Isoleucyl-tRNA Synthetase, Domain 1"/>
    <property type="match status" value="1"/>
</dbReference>
<dbReference type="HAMAP" id="MF_00123">
    <property type="entry name" value="Arg_tRNA_synth"/>
    <property type="match status" value="1"/>
</dbReference>
<dbReference type="InterPro" id="IPR001278">
    <property type="entry name" value="Arg-tRNA-ligase"/>
</dbReference>
<dbReference type="InterPro" id="IPR005148">
    <property type="entry name" value="Arg-tRNA-synth_N"/>
</dbReference>
<dbReference type="InterPro" id="IPR036695">
    <property type="entry name" value="Arg-tRNA-synth_N_sf"/>
</dbReference>
<dbReference type="InterPro" id="IPR035684">
    <property type="entry name" value="ArgRS_core"/>
</dbReference>
<dbReference type="InterPro" id="IPR008909">
    <property type="entry name" value="DALR_anticod-bd"/>
</dbReference>
<dbReference type="InterPro" id="IPR014729">
    <property type="entry name" value="Rossmann-like_a/b/a_fold"/>
</dbReference>
<dbReference type="InterPro" id="IPR009080">
    <property type="entry name" value="tRNAsynth_Ia_anticodon-bd"/>
</dbReference>
<dbReference type="NCBIfam" id="TIGR00456">
    <property type="entry name" value="argS"/>
    <property type="match status" value="1"/>
</dbReference>
<dbReference type="PANTHER" id="PTHR11956:SF5">
    <property type="entry name" value="ARGININE--TRNA LIGASE, CYTOPLASMIC"/>
    <property type="match status" value="1"/>
</dbReference>
<dbReference type="PANTHER" id="PTHR11956">
    <property type="entry name" value="ARGINYL-TRNA SYNTHETASE"/>
    <property type="match status" value="1"/>
</dbReference>
<dbReference type="Pfam" id="PF03485">
    <property type="entry name" value="Arg_tRNA_synt_N"/>
    <property type="match status" value="1"/>
</dbReference>
<dbReference type="Pfam" id="PF05746">
    <property type="entry name" value="DALR_1"/>
    <property type="match status" value="1"/>
</dbReference>
<dbReference type="Pfam" id="PF00750">
    <property type="entry name" value="tRNA-synt_1d"/>
    <property type="match status" value="1"/>
</dbReference>
<dbReference type="PRINTS" id="PR01038">
    <property type="entry name" value="TRNASYNTHARG"/>
</dbReference>
<dbReference type="SMART" id="SM01016">
    <property type="entry name" value="Arg_tRNA_synt_N"/>
    <property type="match status" value="1"/>
</dbReference>
<dbReference type="SMART" id="SM00836">
    <property type="entry name" value="DALR_1"/>
    <property type="match status" value="1"/>
</dbReference>
<dbReference type="SUPFAM" id="SSF47323">
    <property type="entry name" value="Anticodon-binding domain of a subclass of class I aminoacyl-tRNA synthetases"/>
    <property type="match status" value="1"/>
</dbReference>
<dbReference type="SUPFAM" id="SSF55190">
    <property type="entry name" value="Arginyl-tRNA synthetase (ArgRS), N-terminal 'additional' domain"/>
    <property type="match status" value="1"/>
</dbReference>
<dbReference type="SUPFAM" id="SSF52374">
    <property type="entry name" value="Nucleotidylyl transferase"/>
    <property type="match status" value="1"/>
</dbReference>